<dbReference type="EMBL" id="CP000802">
    <property type="protein sequence ID" value="ABV06680.1"/>
    <property type="molecule type" value="Genomic_DNA"/>
</dbReference>
<dbReference type="RefSeq" id="WP_000523004.1">
    <property type="nucleotide sequence ID" value="NC_009800.1"/>
</dbReference>
<dbReference type="KEGG" id="ecx:EcHS_A2404"/>
<dbReference type="HOGENOM" id="CLU_131462_1_0_6"/>
<dbReference type="UniPathway" id="UPA00030"/>
<dbReference type="GO" id="GO:0005886">
    <property type="term" value="C:plasma membrane"/>
    <property type="evidence" value="ECO:0007669"/>
    <property type="project" value="UniProtKB-SubCell"/>
</dbReference>
<dbReference type="GO" id="GO:1901505">
    <property type="term" value="F:carbohydrate derivative transmembrane transporter activity"/>
    <property type="evidence" value="ECO:0007669"/>
    <property type="project" value="InterPro"/>
</dbReference>
<dbReference type="GO" id="GO:0009245">
    <property type="term" value="P:lipid A biosynthetic process"/>
    <property type="evidence" value="ECO:0007669"/>
    <property type="project" value="UniProtKB-UniRule"/>
</dbReference>
<dbReference type="GO" id="GO:0009103">
    <property type="term" value="P:lipopolysaccharide biosynthetic process"/>
    <property type="evidence" value="ECO:0007669"/>
    <property type="project" value="UniProtKB-UniRule"/>
</dbReference>
<dbReference type="FunFam" id="1.10.3730.20:FF:000003">
    <property type="entry name" value="Probable 4-amino-4-deoxy-L-arabinose-phosphoundecaprenol flippase subunit ArnF"/>
    <property type="match status" value="1"/>
</dbReference>
<dbReference type="Gene3D" id="1.10.3730.20">
    <property type="match status" value="1"/>
</dbReference>
<dbReference type="HAMAP" id="MF_00538">
    <property type="entry name" value="Flippase_ArnF"/>
    <property type="match status" value="1"/>
</dbReference>
<dbReference type="InterPro" id="IPR022832">
    <property type="entry name" value="Flippase_ArnF"/>
</dbReference>
<dbReference type="InterPro" id="IPR000390">
    <property type="entry name" value="Small_drug/metabolite_transptr"/>
</dbReference>
<dbReference type="NCBIfam" id="NF002816">
    <property type="entry name" value="PRK02971.1-2"/>
    <property type="match status" value="1"/>
</dbReference>
<dbReference type="PANTHER" id="PTHR30561:SF9">
    <property type="entry name" value="4-AMINO-4-DEOXY-L-ARABINOSE-PHOSPHOUNDECAPRENOL FLIPPASE SUBUNIT ARNF-RELATED"/>
    <property type="match status" value="1"/>
</dbReference>
<dbReference type="PANTHER" id="PTHR30561">
    <property type="entry name" value="SMR FAMILY PROTON-DEPENDENT DRUG EFFLUX TRANSPORTER SUGE"/>
    <property type="match status" value="1"/>
</dbReference>
<dbReference type="SUPFAM" id="SSF103481">
    <property type="entry name" value="Multidrug resistance efflux transporter EmrE"/>
    <property type="match status" value="1"/>
</dbReference>
<sequence>MGLIWGLFSVIIASVAQLSLGFAASHLPPMTHLWDFIAALLAFGLDARILLLGLLGYLLSVFCWYKTLHKLALSKAYALLSMSYVLVWIASMVLPGWEGTFSLKALLGVACIMSGLMLIFLPMTKQRY</sequence>
<protein>
    <recommendedName>
        <fullName evidence="1">Probable 4-amino-4-deoxy-L-arabinose-phosphoundecaprenol flippase subunit ArnF</fullName>
        <shortName evidence="1">L-Ara4N-phosphoundecaprenol flippase subunit ArnF</shortName>
    </recommendedName>
    <alternativeName>
        <fullName evidence="1">Undecaprenyl phosphate-aminoarabinose flippase subunit ArnF</fullName>
    </alternativeName>
</protein>
<evidence type="ECO:0000255" key="1">
    <source>
        <dbReference type="HAMAP-Rule" id="MF_00538"/>
    </source>
</evidence>
<name>ARNF_ECOHS</name>
<keyword id="KW-0997">Cell inner membrane</keyword>
<keyword id="KW-1003">Cell membrane</keyword>
<keyword id="KW-0441">Lipid A biosynthesis</keyword>
<keyword id="KW-0444">Lipid biosynthesis</keyword>
<keyword id="KW-0443">Lipid metabolism</keyword>
<keyword id="KW-0448">Lipopolysaccharide biosynthesis</keyword>
<keyword id="KW-0472">Membrane</keyword>
<keyword id="KW-0812">Transmembrane</keyword>
<keyword id="KW-1133">Transmembrane helix</keyword>
<keyword id="KW-0813">Transport</keyword>
<organism>
    <name type="scientific">Escherichia coli O9:H4 (strain HS)</name>
    <dbReference type="NCBI Taxonomy" id="331112"/>
    <lineage>
        <taxon>Bacteria</taxon>
        <taxon>Pseudomonadati</taxon>
        <taxon>Pseudomonadota</taxon>
        <taxon>Gammaproteobacteria</taxon>
        <taxon>Enterobacterales</taxon>
        <taxon>Enterobacteriaceae</taxon>
        <taxon>Escherichia</taxon>
    </lineage>
</organism>
<feature type="chain" id="PRO_1000061039" description="Probable 4-amino-4-deoxy-L-arabinose-phosphoundecaprenol flippase subunit ArnF">
    <location>
        <begin position="1"/>
        <end position="128"/>
    </location>
</feature>
<feature type="topological domain" description="Cytoplasmic" evidence="1">
    <location>
        <begin position="1"/>
        <end position="2"/>
    </location>
</feature>
<feature type="transmembrane region" description="Helical" evidence="1">
    <location>
        <begin position="3"/>
        <end position="23"/>
    </location>
</feature>
<feature type="topological domain" description="Periplasmic" evidence="1">
    <location>
        <begin position="24"/>
        <end position="35"/>
    </location>
</feature>
<feature type="transmembrane region" description="Helical" evidence="1">
    <location>
        <begin position="36"/>
        <end position="56"/>
    </location>
</feature>
<feature type="topological domain" description="Cytoplasmic" evidence="1">
    <location>
        <begin position="57"/>
        <end position="76"/>
    </location>
</feature>
<feature type="transmembrane region" description="Helical" evidence="1">
    <location>
        <begin position="77"/>
        <end position="97"/>
    </location>
</feature>
<feature type="topological domain" description="Periplasmic" evidence="1">
    <location>
        <begin position="98"/>
        <end position="100"/>
    </location>
</feature>
<feature type="transmembrane region" description="Helical" evidence="1">
    <location>
        <begin position="101"/>
        <end position="121"/>
    </location>
</feature>
<feature type="topological domain" description="Cytoplasmic" evidence="1">
    <location>
        <begin position="122"/>
        <end position="128"/>
    </location>
</feature>
<reference key="1">
    <citation type="journal article" date="2008" name="J. Bacteriol.">
        <title>The pangenome structure of Escherichia coli: comparative genomic analysis of E. coli commensal and pathogenic isolates.</title>
        <authorList>
            <person name="Rasko D.A."/>
            <person name="Rosovitz M.J."/>
            <person name="Myers G.S.A."/>
            <person name="Mongodin E.F."/>
            <person name="Fricke W.F."/>
            <person name="Gajer P."/>
            <person name="Crabtree J."/>
            <person name="Sebaihia M."/>
            <person name="Thomson N.R."/>
            <person name="Chaudhuri R."/>
            <person name="Henderson I.R."/>
            <person name="Sperandio V."/>
            <person name="Ravel J."/>
        </authorList>
    </citation>
    <scope>NUCLEOTIDE SEQUENCE [LARGE SCALE GENOMIC DNA]</scope>
    <source>
        <strain>HS</strain>
    </source>
</reference>
<gene>
    <name evidence="1" type="primary">arnF</name>
    <name type="ordered locus">EcHS_A2404</name>
</gene>
<comment type="function">
    <text evidence="1">Translocates 4-amino-4-deoxy-L-arabinose-phosphoundecaprenol (alpha-L-Ara4N-phosphoundecaprenol) from the cytoplasmic to the periplasmic side of the inner membrane.</text>
</comment>
<comment type="pathway">
    <text evidence="1">Bacterial outer membrane biogenesis; lipopolysaccharide biosynthesis.</text>
</comment>
<comment type="subunit">
    <text evidence="1">Heterodimer of ArnE and ArnF.</text>
</comment>
<comment type="subcellular location">
    <subcellularLocation>
        <location evidence="1">Cell inner membrane</location>
        <topology evidence="1">Multi-pass membrane protein</topology>
    </subcellularLocation>
</comment>
<comment type="similarity">
    <text evidence="1">Belongs to the ArnF family.</text>
</comment>
<accession>A8A2C6</accession>
<proteinExistence type="inferred from homology"/>